<dbReference type="EC" id="1.3.99.31"/>
<dbReference type="EMBL" id="D90087">
    <property type="protein sequence ID" value="BAA14127.1"/>
    <property type="molecule type" value="Genomic_DNA"/>
</dbReference>
<dbReference type="PIR" id="D37802">
    <property type="entry name" value="D37802"/>
</dbReference>
<dbReference type="RefSeq" id="WP_176017230.1">
    <property type="nucleotide sequence ID" value="NZ_CP054909.1"/>
</dbReference>
<dbReference type="PDB" id="4DGK">
    <property type="method" value="X-ray"/>
    <property type="resolution" value="2.35 A"/>
    <property type="chains" value="A=1-492"/>
</dbReference>
<dbReference type="PDBsum" id="4DGK"/>
<dbReference type="SMR" id="P21685"/>
<dbReference type="BioCyc" id="MetaCyc:MONOMER-15564"/>
<dbReference type="BRENDA" id="1.3.99.31">
    <property type="organism ID" value="2137"/>
</dbReference>
<dbReference type="UniPathway" id="UPA00803"/>
<dbReference type="EvolutionaryTrace" id="P21685"/>
<dbReference type="GO" id="GO:0005886">
    <property type="term" value="C:plasma membrane"/>
    <property type="evidence" value="ECO:0007669"/>
    <property type="project" value="UniProtKB-SubCell"/>
</dbReference>
<dbReference type="GO" id="GO:0071949">
    <property type="term" value="F:FAD binding"/>
    <property type="evidence" value="ECO:0000314"/>
    <property type="project" value="UniProtKB"/>
</dbReference>
<dbReference type="GO" id="GO:0016627">
    <property type="term" value="F:oxidoreductase activity, acting on the CH-CH group of donors"/>
    <property type="evidence" value="ECO:0000314"/>
    <property type="project" value="UniProtKB"/>
</dbReference>
<dbReference type="GO" id="GO:0016120">
    <property type="term" value="P:carotene biosynthetic process"/>
    <property type="evidence" value="ECO:0000314"/>
    <property type="project" value="UniProtKB"/>
</dbReference>
<dbReference type="GO" id="GO:0016117">
    <property type="term" value="P:carotenoid biosynthetic process"/>
    <property type="evidence" value="ECO:0007669"/>
    <property type="project" value="UniProtKB-KW"/>
</dbReference>
<dbReference type="FunFam" id="3.50.50.60:FF:000378">
    <property type="entry name" value="Phytoene desaturase"/>
    <property type="match status" value="1"/>
</dbReference>
<dbReference type="FunFam" id="3.50.50.60:FF:000504">
    <property type="entry name" value="Phytoene desaturase"/>
    <property type="match status" value="1"/>
</dbReference>
<dbReference type="FunFam" id="3.50.50.60:FF:000413">
    <property type="entry name" value="Phytoene desaturase (lycopene-forming)"/>
    <property type="match status" value="1"/>
</dbReference>
<dbReference type="Gene3D" id="3.50.50.60">
    <property type="entry name" value="FAD/NAD(P)-binding domain"/>
    <property type="match status" value="3"/>
</dbReference>
<dbReference type="InterPro" id="IPR002937">
    <property type="entry name" value="Amino_oxidase"/>
</dbReference>
<dbReference type="InterPro" id="IPR014105">
    <property type="entry name" value="Carotenoid/retinoid_OxRdtase"/>
</dbReference>
<dbReference type="InterPro" id="IPR036188">
    <property type="entry name" value="FAD/NAD-bd_sf"/>
</dbReference>
<dbReference type="InterPro" id="IPR008150">
    <property type="entry name" value="Phytoene_DH_bac_CS"/>
</dbReference>
<dbReference type="NCBIfam" id="TIGR02734">
    <property type="entry name" value="crtI_fam"/>
    <property type="match status" value="1"/>
</dbReference>
<dbReference type="PANTHER" id="PTHR43734:SF3">
    <property type="entry name" value="B-CAROTENE KETOLASE"/>
    <property type="match status" value="1"/>
</dbReference>
<dbReference type="PANTHER" id="PTHR43734">
    <property type="entry name" value="PHYTOENE DESATURASE"/>
    <property type="match status" value="1"/>
</dbReference>
<dbReference type="Pfam" id="PF01593">
    <property type="entry name" value="Amino_oxidase"/>
    <property type="match status" value="1"/>
</dbReference>
<dbReference type="SUPFAM" id="SSF51905">
    <property type="entry name" value="FAD/NAD(P)-binding domain"/>
    <property type="match status" value="1"/>
</dbReference>
<dbReference type="PROSITE" id="PS00982">
    <property type="entry name" value="PHYTOENE_DH"/>
    <property type="match status" value="1"/>
</dbReference>
<name>CRTI_PANAN</name>
<sequence length="492" mass="55008">MKPTTVIGAGFGGLALAIRLQAAGIPVLLLEQRDKPGGRAYVYEDQGFTFDAGPTVITDPSAIEELFALAGKQLKEYVELLPVTPFYRLCWESGKVFNYDNDQTRLEAQIQQFNPRDVEGYRQFLDYSRAVFKEGYLKLGTVPFLSFRDMLRAAPQLAKLQAWRSVYSKVASYIEDEHLRQAFSFHSLLVGGNPFATSSIYTLIHALEREWGVWFPRGGTGALVQGMIKLFQDLGGEVVLNARVSHMETTGNKIEAVHLEDGRRFLTQAVASNADVVHTYRDLLSQHPAAVKQSNKLQTKRMSNSLFVLYFGLNHHHDQLAHHTVCFGPRYRELIDEIFNHDGLAEDFSLYLHAPCVTDSSLAPEGCGSYYVLAPVPHLGTANLDWTVEGPKLRDRIFAYLEQHYMPGLRSQLVTHRMFTPFDFRDQLNAYHGSAFSVEPVLTQSAWFRPHNRDKTITNLYLVGAGTHPGAGIPGVIGSAKATAGLMLEDLI</sequence>
<feature type="chain" id="PRO_0000067686" description="Phytoene desaturase (lycopene-forming)">
    <location>
        <begin position="1"/>
        <end position="492"/>
    </location>
</feature>
<feature type="binding site" evidence="1">
    <location>
        <begin position="5"/>
        <end position="38"/>
    </location>
    <ligand>
        <name>FAD</name>
        <dbReference type="ChEBI" id="CHEBI:57692"/>
    </ligand>
</feature>
<feature type="strand" evidence="5">
    <location>
        <begin position="4"/>
        <end position="7"/>
    </location>
</feature>
<feature type="helix" evidence="5">
    <location>
        <begin position="10"/>
        <end position="22"/>
    </location>
</feature>
<feature type="strand" evidence="5">
    <location>
        <begin position="27"/>
        <end position="30"/>
    </location>
</feature>
<feature type="strand" evidence="5">
    <location>
        <begin position="42"/>
        <end position="45"/>
    </location>
</feature>
<feature type="strand" evidence="5">
    <location>
        <begin position="48"/>
        <end position="51"/>
    </location>
</feature>
<feature type="helix" evidence="5">
    <location>
        <begin position="61"/>
        <end position="68"/>
    </location>
</feature>
<feature type="turn" evidence="5">
    <location>
        <begin position="69"/>
        <end position="71"/>
    </location>
</feature>
<feature type="helix" evidence="5">
    <location>
        <begin position="74"/>
        <end position="76"/>
    </location>
</feature>
<feature type="strand" evidence="5">
    <location>
        <begin position="80"/>
        <end position="91"/>
    </location>
</feature>
<feature type="strand" evidence="5">
    <location>
        <begin position="96"/>
        <end position="99"/>
    </location>
</feature>
<feature type="helix" evidence="5">
    <location>
        <begin position="103"/>
        <end position="113"/>
    </location>
</feature>
<feature type="helix" evidence="5">
    <location>
        <begin position="117"/>
        <end position="131"/>
    </location>
</feature>
<feature type="strand" evidence="5">
    <location>
        <begin position="133"/>
        <end position="135"/>
    </location>
</feature>
<feature type="helix" evidence="5">
    <location>
        <begin position="147"/>
        <end position="152"/>
    </location>
</feature>
<feature type="helix" evidence="5">
    <location>
        <begin position="154"/>
        <end position="156"/>
    </location>
</feature>
<feature type="turn" evidence="5">
    <location>
        <begin position="157"/>
        <end position="159"/>
    </location>
</feature>
<feature type="helix" evidence="5">
    <location>
        <begin position="161"/>
        <end position="171"/>
    </location>
</feature>
<feature type="helix" evidence="5">
    <location>
        <begin position="177"/>
        <end position="191"/>
    </location>
</feature>
<feature type="helix" evidence="5">
    <location>
        <begin position="201"/>
        <end position="208"/>
    </location>
</feature>
<feature type="strand" evidence="5">
    <location>
        <begin position="213"/>
        <end position="216"/>
    </location>
</feature>
<feature type="helix" evidence="5">
    <location>
        <begin position="219"/>
        <end position="233"/>
    </location>
</feature>
<feature type="strand" evidence="5">
    <location>
        <begin position="237"/>
        <end position="239"/>
    </location>
</feature>
<feature type="strand" evidence="5">
    <location>
        <begin position="244"/>
        <end position="250"/>
    </location>
</feature>
<feature type="strand" evidence="5">
    <location>
        <begin position="253"/>
        <end position="259"/>
    </location>
</feature>
<feature type="strand" evidence="5">
    <location>
        <begin position="264"/>
        <end position="266"/>
    </location>
</feature>
<feature type="strand" evidence="5">
    <location>
        <begin position="270"/>
        <end position="272"/>
    </location>
</feature>
<feature type="strand" evidence="5">
    <location>
        <begin position="305"/>
        <end position="315"/>
    </location>
</feature>
<feature type="strand" evidence="5">
    <location>
        <begin position="322"/>
        <end position="328"/>
    </location>
</feature>
<feature type="strand" evidence="5">
    <location>
        <begin position="347"/>
        <end position="353"/>
    </location>
</feature>
<feature type="helix" evidence="5">
    <location>
        <begin position="355"/>
        <end position="357"/>
    </location>
</feature>
<feature type="helix" evidence="5">
    <location>
        <begin position="360"/>
        <end position="362"/>
    </location>
</feature>
<feature type="strand" evidence="5">
    <location>
        <begin position="368"/>
        <end position="376"/>
    </location>
</feature>
<feature type="turn" evidence="5">
    <location>
        <begin position="379"/>
        <end position="381"/>
    </location>
</feature>
<feature type="helix" evidence="5">
    <location>
        <begin position="386"/>
        <end position="404"/>
    </location>
</feature>
<feature type="helix" evidence="5">
    <location>
        <begin position="409"/>
        <end position="412"/>
    </location>
</feature>
<feature type="strand" evidence="5">
    <location>
        <begin position="413"/>
        <end position="419"/>
    </location>
</feature>
<feature type="turn" evidence="5">
    <location>
        <begin position="421"/>
        <end position="424"/>
    </location>
</feature>
<feature type="strand" evidence="5">
    <location>
        <begin position="460"/>
        <end position="462"/>
    </location>
</feature>
<feature type="helix" evidence="5">
    <location>
        <begin position="472"/>
        <end position="491"/>
    </location>
</feature>
<organism>
    <name type="scientific">Pantoea ananas</name>
    <name type="common">Erwinia uredovora</name>
    <dbReference type="NCBI Taxonomy" id="553"/>
    <lineage>
        <taxon>Bacteria</taxon>
        <taxon>Pseudomonadati</taxon>
        <taxon>Pseudomonadota</taxon>
        <taxon>Gammaproteobacteria</taxon>
        <taxon>Enterobacterales</taxon>
        <taxon>Erwiniaceae</taxon>
        <taxon>Pantoea</taxon>
    </lineage>
</organism>
<comment type="function">
    <text evidence="2">Converts 15-cis-phytoene into all-trans-lycopene via the intermediary of all-trans-phytofluene, all-trans-zeta-carotene and all-trans-neurosporene, by the introduction of four double bonds.</text>
</comment>
<comment type="catalytic activity">
    <reaction evidence="2">
        <text>15-cis-phytoene + 4 A = all-trans-lycopene + 4 AH2</text>
        <dbReference type="Rhea" id="RHEA:15585"/>
        <dbReference type="ChEBI" id="CHEBI:13193"/>
        <dbReference type="ChEBI" id="CHEBI:15948"/>
        <dbReference type="ChEBI" id="CHEBI:17499"/>
        <dbReference type="ChEBI" id="CHEBI:27787"/>
        <dbReference type="EC" id="1.3.99.31"/>
    </reaction>
</comment>
<comment type="cofactor">
    <cofactor evidence="2">
        <name>FAD</name>
        <dbReference type="ChEBI" id="CHEBI:57692"/>
    </cofactor>
</comment>
<comment type="activity regulation">
    <text evidence="2">Inhibited by NAD and NADP.</text>
</comment>
<comment type="pathway">
    <text evidence="2 3">Carotenoid biosynthesis; lycopene biosynthesis.</text>
</comment>
<comment type="subcellular location">
    <subcellularLocation>
        <location evidence="2">Cell membrane</location>
    </subcellularLocation>
</comment>
<comment type="similarity">
    <text evidence="4">Belongs to the carotenoid/retinoid oxidoreductase family.</text>
</comment>
<gene>
    <name type="primary">crtI</name>
</gene>
<evidence type="ECO:0000255" key="1"/>
<evidence type="ECO:0000269" key="2">
    <source>
    </source>
</evidence>
<evidence type="ECO:0000269" key="3">
    <source>
    </source>
</evidence>
<evidence type="ECO:0000305" key="4"/>
<evidence type="ECO:0007829" key="5">
    <source>
        <dbReference type="PDB" id="4DGK"/>
    </source>
</evidence>
<accession>P21685</accession>
<reference key="1">
    <citation type="journal article" date="1990" name="J. Bacteriol.">
        <title>Elucidation of the Erwinia uredovora carotenoid biosynthetic pathway by functional analysis of gene products expressed in Escherichia coli.</title>
        <authorList>
            <person name="Misawa N."/>
            <person name="Nakagawa M."/>
            <person name="Kobayashi K."/>
            <person name="Yamano S."/>
            <person name="Izawa Y."/>
            <person name="Nakamura K."/>
            <person name="Harashima K."/>
        </authorList>
    </citation>
    <scope>NUCLEOTIDE SEQUENCE [GENOMIC DNA]</scope>
    <scope>PATHWAY</scope>
    <source>
        <strain>ATCC 19321 / DSM 30080 / NCPPB 800 / NRRL B-14773 / 20D3</strain>
    </source>
</reference>
<reference key="2">
    <citation type="journal article" date="1992" name="J. Biol. Chem.">
        <title>Expression in Escherichia coli, purification, and reactivation of the recombinant Erwinia uredovora phytoene desaturase.</title>
        <authorList>
            <person name="Fraser P.D."/>
            <person name="Misawa N."/>
            <person name="Linden H."/>
            <person name="Yamano S."/>
            <person name="Kobayashi K."/>
            <person name="Sandmann G."/>
        </authorList>
    </citation>
    <scope>FUNCTION</scope>
    <scope>CATALYTIC ACTIVITY</scope>
    <scope>COFACTOR</scope>
    <scope>ACTIVITY REGULATION</scope>
    <scope>PATHWAY</scope>
    <scope>SUBCELLULAR LOCATION</scope>
</reference>
<protein>
    <recommendedName>
        <fullName>Phytoene desaturase (lycopene-forming)</fullName>
        <ecNumber>1.3.99.31</ecNumber>
    </recommendedName>
    <alternativeName>
        <fullName>4-step phytoene desaturase</fullName>
    </alternativeName>
    <alternativeName>
        <fullName>Phytoene dehydrogenase</fullName>
    </alternativeName>
</protein>
<keyword id="KW-0002">3D-structure</keyword>
<keyword id="KW-0125">Carotenoid biosynthesis</keyword>
<keyword id="KW-1003">Cell membrane</keyword>
<keyword id="KW-0274">FAD</keyword>
<keyword id="KW-0285">Flavoprotein</keyword>
<keyword id="KW-0472">Membrane</keyword>
<keyword id="KW-0560">Oxidoreductase</keyword>
<proteinExistence type="evidence at protein level"/>